<sequence length="69" mass="7671">MAISRGDMVRIKRPESYWYNEVGKVASIDTSGIRYPVVVRFEQVNYNGISGSEGGINTNNFAESELEPA</sequence>
<gene>
    <name evidence="1" type="primary">psaE</name>
    <name type="ordered locus">SynWH7803_0540</name>
</gene>
<comment type="function">
    <text evidence="1">Stabilizes the interaction between PsaC and the PSI core, assists the docking of the ferredoxin to PSI and interacts with ferredoxin-NADP oxidoreductase.</text>
</comment>
<comment type="subcellular location">
    <subcellularLocation>
        <location evidence="1">Cellular thylakoid membrane</location>
        <topology evidence="1">Peripheral membrane protein</topology>
    </subcellularLocation>
</comment>
<comment type="similarity">
    <text evidence="1">Belongs to the PsaE family.</text>
</comment>
<keyword id="KW-0472">Membrane</keyword>
<keyword id="KW-0602">Photosynthesis</keyword>
<keyword id="KW-0603">Photosystem I</keyword>
<keyword id="KW-1185">Reference proteome</keyword>
<keyword id="KW-0793">Thylakoid</keyword>
<organism>
    <name type="scientific">Synechococcus sp. (strain WH7803)</name>
    <dbReference type="NCBI Taxonomy" id="32051"/>
    <lineage>
        <taxon>Bacteria</taxon>
        <taxon>Bacillati</taxon>
        <taxon>Cyanobacteriota</taxon>
        <taxon>Cyanophyceae</taxon>
        <taxon>Synechococcales</taxon>
        <taxon>Synechococcaceae</taxon>
        <taxon>Synechococcus</taxon>
    </lineage>
</organism>
<accession>A5GJ51</accession>
<protein>
    <recommendedName>
        <fullName evidence="1">Photosystem I reaction center subunit IV</fullName>
    </recommendedName>
</protein>
<feature type="chain" id="PRO_1000061311" description="Photosystem I reaction center subunit IV">
    <location>
        <begin position="1"/>
        <end position="69"/>
    </location>
</feature>
<dbReference type="EMBL" id="CT971583">
    <property type="protein sequence ID" value="CAK22966.1"/>
    <property type="molecule type" value="Genomic_DNA"/>
</dbReference>
<dbReference type="SMR" id="A5GJ51"/>
<dbReference type="STRING" id="32051.SynWH7803_0540"/>
<dbReference type="KEGG" id="syx:SynWH7803_0540"/>
<dbReference type="eggNOG" id="ENOG503313D">
    <property type="taxonomic scope" value="Bacteria"/>
</dbReference>
<dbReference type="HOGENOM" id="CLU_136462_2_1_3"/>
<dbReference type="OrthoDB" id="427926at2"/>
<dbReference type="Proteomes" id="UP000001566">
    <property type="component" value="Chromosome"/>
</dbReference>
<dbReference type="GO" id="GO:0009538">
    <property type="term" value="C:photosystem I reaction center"/>
    <property type="evidence" value="ECO:0007669"/>
    <property type="project" value="InterPro"/>
</dbReference>
<dbReference type="GO" id="GO:0031676">
    <property type="term" value="C:plasma membrane-derived thylakoid membrane"/>
    <property type="evidence" value="ECO:0007669"/>
    <property type="project" value="UniProtKB-SubCell"/>
</dbReference>
<dbReference type="GO" id="GO:0015979">
    <property type="term" value="P:photosynthesis"/>
    <property type="evidence" value="ECO:0007669"/>
    <property type="project" value="UniProtKB-UniRule"/>
</dbReference>
<dbReference type="Gene3D" id="2.30.30.50">
    <property type="match status" value="1"/>
</dbReference>
<dbReference type="HAMAP" id="MF_00613">
    <property type="entry name" value="PSI_PsaE"/>
    <property type="match status" value="1"/>
</dbReference>
<dbReference type="InterPro" id="IPR008990">
    <property type="entry name" value="Elect_transpt_acc-like_dom_sf"/>
</dbReference>
<dbReference type="InterPro" id="IPR003375">
    <property type="entry name" value="PSI_PsaE"/>
</dbReference>
<dbReference type="NCBIfam" id="NF002745">
    <property type="entry name" value="PRK02749.1"/>
    <property type="match status" value="1"/>
</dbReference>
<dbReference type="PANTHER" id="PTHR34549">
    <property type="entry name" value="PHOTOSYSTEM I REACTION CENTER SUBUNIT IV A, CHLOROPLASTIC-RELATED"/>
    <property type="match status" value="1"/>
</dbReference>
<dbReference type="PANTHER" id="PTHR34549:SF2">
    <property type="entry name" value="PHOTOSYSTEM I SUBUNIT IV"/>
    <property type="match status" value="1"/>
</dbReference>
<dbReference type="Pfam" id="PF02427">
    <property type="entry name" value="PSI_PsaE"/>
    <property type="match status" value="1"/>
</dbReference>
<dbReference type="SUPFAM" id="SSF50090">
    <property type="entry name" value="Electron transport accessory proteins"/>
    <property type="match status" value="1"/>
</dbReference>
<name>PSAE_SYNPW</name>
<evidence type="ECO:0000255" key="1">
    <source>
        <dbReference type="HAMAP-Rule" id="MF_00613"/>
    </source>
</evidence>
<proteinExistence type="inferred from homology"/>
<reference key="1">
    <citation type="submission" date="2006-05" db="EMBL/GenBank/DDBJ databases">
        <authorList>
            <consortium name="Genoscope"/>
        </authorList>
    </citation>
    <scope>NUCLEOTIDE SEQUENCE [LARGE SCALE GENOMIC DNA]</scope>
    <source>
        <strain>WH7803</strain>
    </source>
</reference>